<evidence type="ECO:0000250" key="1"/>
<evidence type="ECO:0000250" key="2">
    <source>
        <dbReference type="UniProtKB" id="P13504"/>
    </source>
</evidence>
<evidence type="ECO:0000250" key="3">
    <source>
        <dbReference type="UniProtKB" id="P14778"/>
    </source>
</evidence>
<evidence type="ECO:0000255" key="4"/>
<evidence type="ECO:0000255" key="5">
    <source>
        <dbReference type="PROSITE-ProRule" id="PRU00114"/>
    </source>
</evidence>
<evidence type="ECO:0000255" key="6">
    <source>
        <dbReference type="PROSITE-ProRule" id="PRU00204"/>
    </source>
</evidence>
<evidence type="ECO:0000305" key="7"/>
<organism>
    <name type="scientific">Rattus norvegicus</name>
    <name type="common">Rat</name>
    <dbReference type="NCBI Taxonomy" id="10116"/>
    <lineage>
        <taxon>Eukaryota</taxon>
        <taxon>Metazoa</taxon>
        <taxon>Chordata</taxon>
        <taxon>Craniata</taxon>
        <taxon>Vertebrata</taxon>
        <taxon>Euteleostomi</taxon>
        <taxon>Mammalia</taxon>
        <taxon>Eutheria</taxon>
        <taxon>Euarchontoglires</taxon>
        <taxon>Glires</taxon>
        <taxon>Rodentia</taxon>
        <taxon>Myomorpha</taxon>
        <taxon>Muroidea</taxon>
        <taxon>Muridae</taxon>
        <taxon>Murinae</taxon>
        <taxon>Rattus</taxon>
    </lineage>
</organism>
<keyword id="KW-1003">Cell membrane</keyword>
<keyword id="KW-1015">Disulfide bond</keyword>
<keyword id="KW-0325">Glycoprotein</keyword>
<keyword id="KW-0378">Hydrolase</keyword>
<keyword id="KW-0393">Immunoglobulin domain</keyword>
<keyword id="KW-0395">Inflammatory response</keyword>
<keyword id="KW-0472">Membrane</keyword>
<keyword id="KW-0520">NAD</keyword>
<keyword id="KW-0597">Phosphoprotein</keyword>
<keyword id="KW-0675">Receptor</keyword>
<keyword id="KW-1185">Reference proteome</keyword>
<keyword id="KW-0677">Repeat</keyword>
<keyword id="KW-0964">Secreted</keyword>
<keyword id="KW-0732">Signal</keyword>
<keyword id="KW-0812">Transmembrane</keyword>
<keyword id="KW-1133">Transmembrane helix</keyword>
<feature type="signal peptide" evidence="1">
    <location>
        <begin position="1"/>
        <end position="19"/>
    </location>
</feature>
<feature type="chain" id="PRO_0000015437" description="Interleukin-1 receptor type 1, membrane form">
    <location>
        <begin position="20"/>
        <end position="576"/>
    </location>
</feature>
<feature type="chain" id="PRO_0000415346" description="Interleukin-1 receptor type 1, soluble form">
    <location>
        <begin position="20"/>
        <end status="unknown"/>
    </location>
</feature>
<feature type="topological domain" description="Extracellular" evidence="4">
    <location>
        <begin position="20"/>
        <end position="338"/>
    </location>
</feature>
<feature type="transmembrane region" description="Helical" evidence="4">
    <location>
        <begin position="339"/>
        <end position="359"/>
    </location>
</feature>
<feature type="topological domain" description="Cytoplasmic" evidence="4">
    <location>
        <begin position="360"/>
        <end position="576"/>
    </location>
</feature>
<feature type="domain" description="Ig-like C2-type 1">
    <location>
        <begin position="20"/>
        <end position="115"/>
    </location>
</feature>
<feature type="domain" description="Ig-like C2-type 2">
    <location>
        <begin position="121"/>
        <end position="217"/>
    </location>
</feature>
<feature type="domain" description="Ig-like C2-type 3">
    <location>
        <begin position="229"/>
        <end position="331"/>
    </location>
</feature>
<feature type="domain" description="TIR" evidence="6">
    <location>
        <begin position="386"/>
        <end position="541"/>
    </location>
</feature>
<feature type="active site" evidence="6">
    <location>
        <position position="473"/>
    </location>
</feature>
<feature type="modified residue" description="Phosphotyrosine" evidence="3">
    <location>
        <position position="499"/>
    </location>
</feature>
<feature type="modified residue" description="Phosphothreonine; by PKC" evidence="2">
    <location>
        <position position="556"/>
    </location>
</feature>
<feature type="glycosylation site" description="N-linked (GlcNAc...) asparagine" evidence="4">
    <location>
        <position position="63"/>
    </location>
</feature>
<feature type="glycosylation site" description="N-linked (GlcNAc...) asparagine" evidence="4">
    <location>
        <position position="103"/>
    </location>
</feature>
<feature type="glycosylation site" description="N-linked (GlcNAc...) asparagine" evidence="4">
    <location>
        <position position="236"/>
    </location>
</feature>
<feature type="glycosylation site" description="N-linked (GlcNAc...) asparagine" evidence="4">
    <location>
        <position position="252"/>
    </location>
</feature>
<feature type="glycosylation site" description="N-linked (GlcNAc...) asparagine" evidence="4">
    <location>
        <position position="266"/>
    </location>
</feature>
<feature type="disulfide bond" evidence="5">
    <location>
        <begin position="25"/>
        <end position="107"/>
    </location>
</feature>
<feature type="disulfide bond" evidence="5">
    <location>
        <begin position="46"/>
        <end position="99"/>
    </location>
</feature>
<feature type="disulfide bond" evidence="5">
    <location>
        <begin position="145"/>
        <end position="199"/>
    </location>
</feature>
<feature type="disulfide bond" evidence="5">
    <location>
        <begin position="251"/>
        <end position="315"/>
    </location>
</feature>
<name>IL1R1_RAT</name>
<sequence length="576" mass="66759">MENMKVLLGFICLIVPLLSLETDKCTEYPNEVISFSSVNEIDIRSCPLTPNEMHGGTIIWYKNDSKTPISADKDSRIHQQNEHLWFVPAKMEDSGYYYCIMRNSTYCLKTKITMSVLENDPGLCYNTQASFIQRLHVAGDGSLVCPYLDFFKDENNELPKVQWYKNCKPLPLDDGNFFGFKNKLMVMNVAEEHRGNYTCRTSYTYQGKQYPVTRVITFITIDDSKRDRPVIMSPRNETMEADPGSTIQLICNVTGQFTDLVYWKWNGSEIEWDDPILAEDYQFLEHPSAKRKYTLITTLNVSEVKSQFYRYPFICFVKNTHILETAHVRLVYPVPDFKNYLIGGFAIFTATAVFCACIYKVFKVDIVLWYRDSCSDFLPRKASDGRTYDAYVLYPKTYGEGSFAYLDTFVFKLLPEVLEGQFGYKLFICGRDDYVGEDTIEVTNENVKRSRRLIIILVRDMGSFSCLGQSSEEQIAIYDALIREGIKIILLELEKIQDYEKMPESIQFIKQKHGAICWSGDFKERPQSAKTRFWKNLRYQMPAQRRSPLSKHHLLTLDPVLDTKEKLQAETHLPLG</sequence>
<dbReference type="EC" id="3.2.2.6" evidence="6"/>
<dbReference type="EMBL" id="M95578">
    <property type="protein sequence ID" value="AAA16196.1"/>
    <property type="status" value="ALT_INIT"/>
    <property type="molecule type" value="mRNA"/>
</dbReference>
<dbReference type="PIR" id="I56526">
    <property type="entry name" value="I56526"/>
</dbReference>
<dbReference type="SMR" id="Q02955"/>
<dbReference type="FunCoup" id="Q02955">
    <property type="interactions" value="96"/>
</dbReference>
<dbReference type="STRING" id="10116.ENSRNOP00000019673"/>
<dbReference type="GlyCosmos" id="Q02955">
    <property type="glycosylation" value="5 sites, No reported glycans"/>
</dbReference>
<dbReference type="GlyGen" id="Q02955">
    <property type="glycosylation" value="5 sites"/>
</dbReference>
<dbReference type="PhosphoSitePlus" id="Q02955"/>
<dbReference type="PaxDb" id="10116-ENSRNOP00000019673"/>
<dbReference type="UCSC" id="RGD:2892">
    <property type="organism name" value="rat"/>
</dbReference>
<dbReference type="AGR" id="RGD:2892"/>
<dbReference type="RGD" id="2892">
    <property type="gene designation" value="Il1r1"/>
</dbReference>
<dbReference type="eggNOG" id="ENOG502QWEU">
    <property type="taxonomic scope" value="Eukaryota"/>
</dbReference>
<dbReference type="InParanoid" id="Q02955"/>
<dbReference type="PhylomeDB" id="Q02955"/>
<dbReference type="Reactome" id="R-RNO-9020702">
    <property type="pathway name" value="Interleukin-1 signaling"/>
</dbReference>
<dbReference type="PRO" id="PR:Q02955"/>
<dbReference type="Proteomes" id="UP000002494">
    <property type="component" value="Unplaced"/>
</dbReference>
<dbReference type="GO" id="GO:0030424">
    <property type="term" value="C:axon"/>
    <property type="evidence" value="ECO:0000314"/>
    <property type="project" value="RGD"/>
</dbReference>
<dbReference type="GO" id="GO:0009986">
    <property type="term" value="C:cell surface"/>
    <property type="evidence" value="ECO:0000314"/>
    <property type="project" value="RGD"/>
</dbReference>
<dbReference type="GO" id="GO:0009897">
    <property type="term" value="C:external side of plasma membrane"/>
    <property type="evidence" value="ECO:0000266"/>
    <property type="project" value="RGD"/>
</dbReference>
<dbReference type="GO" id="GO:0005615">
    <property type="term" value="C:extracellular space"/>
    <property type="evidence" value="ECO:0000314"/>
    <property type="project" value="RGD"/>
</dbReference>
<dbReference type="GO" id="GO:0016020">
    <property type="term" value="C:membrane"/>
    <property type="evidence" value="ECO:0000266"/>
    <property type="project" value="RGD"/>
</dbReference>
<dbReference type="GO" id="GO:0005886">
    <property type="term" value="C:plasma membrane"/>
    <property type="evidence" value="ECO:0000266"/>
    <property type="project" value="RGD"/>
</dbReference>
<dbReference type="GO" id="GO:0032991">
    <property type="term" value="C:protein-containing complex"/>
    <property type="evidence" value="ECO:0000314"/>
    <property type="project" value="RGD"/>
</dbReference>
<dbReference type="GO" id="GO:0019966">
    <property type="term" value="F:interleukin-1 binding"/>
    <property type="evidence" value="ECO:0000266"/>
    <property type="project" value="RGD"/>
</dbReference>
<dbReference type="GO" id="GO:0004908">
    <property type="term" value="F:interleukin-1 receptor activity"/>
    <property type="evidence" value="ECO:0000266"/>
    <property type="project" value="RGD"/>
</dbReference>
<dbReference type="GO" id="GO:0004909">
    <property type="term" value="F:interleukin-1, type I, activating receptor activity"/>
    <property type="evidence" value="ECO:0007669"/>
    <property type="project" value="InterPro"/>
</dbReference>
<dbReference type="GO" id="GO:0035255">
    <property type="term" value="F:ionotropic glutamate receptor binding"/>
    <property type="evidence" value="ECO:0000353"/>
    <property type="project" value="RGD"/>
</dbReference>
<dbReference type="GO" id="GO:0061809">
    <property type="term" value="F:NAD+ nucleosidase activity, cyclic ADP-ribose generating"/>
    <property type="evidence" value="ECO:0007669"/>
    <property type="project" value="UniProtKB-EC"/>
</dbReference>
<dbReference type="GO" id="GO:0005161">
    <property type="term" value="F:platelet-derived growth factor receptor binding"/>
    <property type="evidence" value="ECO:0000266"/>
    <property type="project" value="RGD"/>
</dbReference>
<dbReference type="GO" id="GO:0002020">
    <property type="term" value="F:protease binding"/>
    <property type="evidence" value="ECO:0000266"/>
    <property type="project" value="RGD"/>
</dbReference>
<dbReference type="GO" id="GO:0071333">
    <property type="term" value="P:cellular response to glucose stimulus"/>
    <property type="evidence" value="ECO:0000270"/>
    <property type="project" value="RGD"/>
</dbReference>
<dbReference type="GO" id="GO:0019221">
    <property type="term" value="P:cytokine-mediated signaling pathway"/>
    <property type="evidence" value="ECO:0000266"/>
    <property type="project" value="RGD"/>
</dbReference>
<dbReference type="GO" id="GO:0010286">
    <property type="term" value="P:heat acclimation"/>
    <property type="evidence" value="ECO:0000315"/>
    <property type="project" value="RGD"/>
</dbReference>
<dbReference type="GO" id="GO:0006954">
    <property type="term" value="P:inflammatory response"/>
    <property type="evidence" value="ECO:0007669"/>
    <property type="project" value="UniProtKB-KW"/>
</dbReference>
<dbReference type="GO" id="GO:0070498">
    <property type="term" value="P:interleukin-1-mediated signaling pathway"/>
    <property type="evidence" value="ECO:0000315"/>
    <property type="project" value="RGD"/>
</dbReference>
<dbReference type="GO" id="GO:0043123">
    <property type="term" value="P:positive regulation of canonical NF-kappaB signal transduction"/>
    <property type="evidence" value="ECO:0000266"/>
    <property type="project" value="RGD"/>
</dbReference>
<dbReference type="GO" id="GO:2000661">
    <property type="term" value="P:positive regulation of interleukin-1-mediated signaling pathway"/>
    <property type="evidence" value="ECO:0000266"/>
    <property type="project" value="RGD"/>
</dbReference>
<dbReference type="GO" id="GO:2001224">
    <property type="term" value="P:positive regulation of neuron migration"/>
    <property type="evidence" value="ECO:0000315"/>
    <property type="project" value="RGD"/>
</dbReference>
<dbReference type="GO" id="GO:2000391">
    <property type="term" value="P:positive regulation of neutrophil extravasation"/>
    <property type="evidence" value="ECO:0000266"/>
    <property type="project" value="RGD"/>
</dbReference>
<dbReference type="GO" id="GO:0051897">
    <property type="term" value="P:positive regulation of phosphatidylinositol 3-kinase/protein kinase B signal transduction"/>
    <property type="evidence" value="ECO:0000266"/>
    <property type="project" value="RGD"/>
</dbReference>
<dbReference type="GO" id="GO:0010641">
    <property type="term" value="P:positive regulation of platelet-derived growth factor receptor signaling pathway"/>
    <property type="evidence" value="ECO:0000266"/>
    <property type="project" value="RGD"/>
</dbReference>
<dbReference type="GO" id="GO:2000556">
    <property type="term" value="P:positive regulation of T-helper 1 cell cytokine production"/>
    <property type="evidence" value="ECO:0000250"/>
    <property type="project" value="UniProtKB"/>
</dbReference>
<dbReference type="GO" id="GO:0032729">
    <property type="term" value="P:positive regulation of type II interferon production"/>
    <property type="evidence" value="ECO:0000250"/>
    <property type="project" value="UniProtKB"/>
</dbReference>
<dbReference type="GO" id="GO:0050727">
    <property type="term" value="P:regulation of inflammatory response"/>
    <property type="evidence" value="ECO:0000266"/>
    <property type="project" value="RGD"/>
</dbReference>
<dbReference type="GO" id="GO:0070849">
    <property type="term" value="P:response to epidermal growth factor"/>
    <property type="evidence" value="ECO:0000270"/>
    <property type="project" value="RGD"/>
</dbReference>
<dbReference type="GO" id="GO:0070555">
    <property type="term" value="P:response to interleukin-1"/>
    <property type="evidence" value="ECO:0000270"/>
    <property type="project" value="RGD"/>
</dbReference>
<dbReference type="GO" id="GO:0071731">
    <property type="term" value="P:response to nitric oxide"/>
    <property type="evidence" value="ECO:0000270"/>
    <property type="project" value="RGD"/>
</dbReference>
<dbReference type="GO" id="GO:1990834">
    <property type="term" value="P:response to odorant"/>
    <property type="evidence" value="ECO:0000270"/>
    <property type="project" value="RGD"/>
</dbReference>
<dbReference type="GO" id="GO:0071559">
    <property type="term" value="P:response to transforming growth factor beta"/>
    <property type="evidence" value="ECO:0000270"/>
    <property type="project" value="RGD"/>
</dbReference>
<dbReference type="CDD" id="cd20932">
    <property type="entry name" value="Ig3_IL1R_like"/>
    <property type="match status" value="1"/>
</dbReference>
<dbReference type="FunFam" id="3.40.50.10140:FF:000002">
    <property type="entry name" value="Interleukin 1 receptor accessory protein"/>
    <property type="match status" value="1"/>
</dbReference>
<dbReference type="FunFam" id="2.60.40.10:FF:001064">
    <property type="entry name" value="Interleukin 1 receptor, type I"/>
    <property type="match status" value="1"/>
</dbReference>
<dbReference type="FunFam" id="2.60.40.10:FF:000188">
    <property type="entry name" value="Interleukin-1 receptor accessory protein-like 1"/>
    <property type="match status" value="1"/>
</dbReference>
<dbReference type="FunFam" id="2.60.40.10:FF:000284">
    <property type="entry name" value="interleukin-1 receptor accessory protein-like 1"/>
    <property type="match status" value="1"/>
</dbReference>
<dbReference type="Gene3D" id="2.60.40.10">
    <property type="entry name" value="Immunoglobulins"/>
    <property type="match status" value="3"/>
</dbReference>
<dbReference type="Gene3D" id="3.40.50.10140">
    <property type="entry name" value="Toll/interleukin-1 receptor homology (TIR) domain"/>
    <property type="match status" value="1"/>
</dbReference>
<dbReference type="InterPro" id="IPR007110">
    <property type="entry name" value="Ig-like_dom"/>
</dbReference>
<dbReference type="InterPro" id="IPR036179">
    <property type="entry name" value="Ig-like_dom_sf"/>
</dbReference>
<dbReference type="InterPro" id="IPR013783">
    <property type="entry name" value="Ig-like_fold"/>
</dbReference>
<dbReference type="InterPro" id="IPR003599">
    <property type="entry name" value="Ig_sub"/>
</dbReference>
<dbReference type="InterPro" id="IPR015621">
    <property type="entry name" value="IL-1_rcpt_fam"/>
</dbReference>
<dbReference type="InterPro" id="IPR004076">
    <property type="entry name" value="IL-1_rcpt_I-typ"/>
</dbReference>
<dbReference type="InterPro" id="IPR004074">
    <property type="entry name" value="IL-1_rcpt_I/II-typ"/>
</dbReference>
<dbReference type="InterPro" id="IPR041416">
    <property type="entry name" value="IL-1RAcP-like_ig"/>
</dbReference>
<dbReference type="InterPro" id="IPR000157">
    <property type="entry name" value="TIR_dom"/>
</dbReference>
<dbReference type="InterPro" id="IPR035897">
    <property type="entry name" value="Toll_tir_struct_dom_sf"/>
</dbReference>
<dbReference type="PANTHER" id="PTHR11890">
    <property type="entry name" value="INTERLEUKIN-1 RECEPTOR FAMILY MEMBER"/>
    <property type="match status" value="1"/>
</dbReference>
<dbReference type="PANTHER" id="PTHR11890:SF26">
    <property type="entry name" value="INTERLEUKIN-1 RECEPTOR TYPE 1"/>
    <property type="match status" value="1"/>
</dbReference>
<dbReference type="Pfam" id="PF13895">
    <property type="entry name" value="Ig_2"/>
    <property type="match status" value="1"/>
</dbReference>
<dbReference type="Pfam" id="PF18452">
    <property type="entry name" value="Ig_6"/>
    <property type="match status" value="1"/>
</dbReference>
<dbReference type="Pfam" id="PF01582">
    <property type="entry name" value="TIR"/>
    <property type="match status" value="1"/>
</dbReference>
<dbReference type="PRINTS" id="PR01538">
    <property type="entry name" value="INTRLEUKN1R1"/>
</dbReference>
<dbReference type="PRINTS" id="PR01536">
    <property type="entry name" value="INTRLKN1R12F"/>
</dbReference>
<dbReference type="PRINTS" id="PR01537">
    <property type="entry name" value="INTRLKN1R1F"/>
</dbReference>
<dbReference type="SMART" id="SM00409">
    <property type="entry name" value="IG"/>
    <property type="match status" value="3"/>
</dbReference>
<dbReference type="SMART" id="SM00255">
    <property type="entry name" value="TIR"/>
    <property type="match status" value="1"/>
</dbReference>
<dbReference type="SUPFAM" id="SSF48726">
    <property type="entry name" value="Immunoglobulin"/>
    <property type="match status" value="3"/>
</dbReference>
<dbReference type="SUPFAM" id="SSF52200">
    <property type="entry name" value="Toll/Interleukin receptor TIR domain"/>
    <property type="match status" value="1"/>
</dbReference>
<dbReference type="PROSITE" id="PS50835">
    <property type="entry name" value="IG_LIKE"/>
    <property type="match status" value="3"/>
</dbReference>
<dbReference type="PROSITE" id="PS50104">
    <property type="entry name" value="TIR"/>
    <property type="match status" value="1"/>
</dbReference>
<gene>
    <name type="primary">Il1r1</name>
    <name type="synonym">Il1ra</name>
</gene>
<reference key="1">
    <citation type="journal article" date="1993" name="J. Neuroimmunol.">
        <title>An mRNA homologous to interleukin-1 receptor type I is expressed in cultured rat sympathetic ganglia.</title>
        <authorList>
            <person name="Hart R.P."/>
            <person name="Liu C."/>
            <person name="Shadiack A.M."/>
            <person name="McCormack R.J."/>
            <person name="Jonakait G.M."/>
        </authorList>
    </citation>
    <scope>NUCLEOTIDE SEQUENCE [MRNA]</scope>
    <source>
        <tissue>Ganglion</tissue>
    </source>
</reference>
<accession>Q02955</accession>
<comment type="function">
    <text evidence="3">Receptor for IL1A, IL1B and IL1RN. After binding to interleukin-1 associates with the coreceptor IL1RAP to form the high affinity interleukin-1 receptor complex which mediates interleukin-1-dependent activation of NF-kappa-B, MAPK and other pathways. Signaling involves the recruitment of adapter molecules such as TOLLIP, MYD88, and IRAK1 or IRAK2 via the respective TIR domains of the receptor/coreceptor subunits. Binds ligands with comparable affinity and binding of antagonist IL1RN prevents association with IL1RAP to form a signaling complex. Involved in IL1B-mediated costimulation of IFNG production from T-helper 1 (Th1) cells (By similarity).</text>
</comment>
<comment type="catalytic activity">
    <reaction evidence="6">
        <text>NAD(+) + H2O = ADP-D-ribose + nicotinamide + H(+)</text>
        <dbReference type="Rhea" id="RHEA:16301"/>
        <dbReference type="ChEBI" id="CHEBI:15377"/>
        <dbReference type="ChEBI" id="CHEBI:15378"/>
        <dbReference type="ChEBI" id="CHEBI:17154"/>
        <dbReference type="ChEBI" id="CHEBI:57540"/>
        <dbReference type="ChEBI" id="CHEBI:57967"/>
        <dbReference type="EC" id="3.2.2.6"/>
    </reaction>
    <physiologicalReaction direction="left-to-right" evidence="6">
        <dbReference type="Rhea" id="RHEA:16302"/>
    </physiologicalReaction>
</comment>
<comment type="subunit">
    <text evidence="3">The interleukin-1 receptor complex is a heterodimer of IL1R1 and IL1RAP. Interacts with PIK3R1. Interacts with IL1A (By similarity).</text>
</comment>
<comment type="subcellular location">
    <subcellularLocation>
        <location>Membrane</location>
        <topology>Single-pass type I membrane protein</topology>
    </subcellularLocation>
    <subcellularLocation>
        <location evidence="7">Cell membrane</location>
    </subcellularLocation>
    <subcellularLocation>
        <location evidence="1">Secreted</location>
    </subcellularLocation>
</comment>
<comment type="domain">
    <text evidence="6">The TIR domain mediates NAD(+) hydrolase (NADase) activity. Self-association of TIR domains is required for NADase activity.</text>
</comment>
<comment type="PTM">
    <text evidence="1">A soluble form (sIL1R1) is probably produced by proteolytic cleavage at the cell surface (shedding).</text>
</comment>
<comment type="PTM">
    <text evidence="1">Rapidly phosphorylated on Tyr-499 in response to IL-1, which creates a SH2 binding site for the PI 3-kinase regulatory subunit PIK3R1.</text>
</comment>
<comment type="similarity">
    <text evidence="7">Belongs to the interleukin-1 receptor family.</text>
</comment>
<comment type="sequence caution" evidence="7">
    <conflict type="erroneous initiation">
        <sequence resource="EMBL-CDS" id="AAA16196"/>
    </conflict>
</comment>
<proteinExistence type="evidence at transcript level"/>
<protein>
    <recommendedName>
        <fullName>Interleukin-1 receptor type 1</fullName>
        <shortName>IL-1R-1</shortName>
        <shortName>IL-1RT-1</shortName>
        <shortName>IL-1RT1</shortName>
        <ecNumber evidence="6">3.2.2.6</ecNumber>
    </recommendedName>
    <alternativeName>
        <fullName>CD121 antigen-like family member A</fullName>
    </alternativeName>
    <alternativeName>
        <fullName>Interleukin-1 receptor alpha</fullName>
        <shortName>IL-1R-alpha</shortName>
    </alternativeName>
    <alternativeName>
        <fullName>Interleukin-1 receptor type I</fullName>
    </alternativeName>
    <alternativeName>
        <fullName>p80</fullName>
    </alternativeName>
    <cdAntigenName>CD121a</cdAntigenName>
    <component>
        <recommendedName>
            <fullName>Interleukin-1 receptor type 1, membrane form</fullName>
            <shortName>mIL-1R1</shortName>
            <shortName>mIL-1RI</shortName>
        </recommendedName>
    </component>
    <component>
        <recommendedName>
            <fullName>Interleukin-1 receptor type 1, soluble form</fullName>
            <shortName>sIL-1R1</shortName>
            <shortName>sIL-1RI</shortName>
        </recommendedName>
    </component>
</protein>